<reference key="1">
    <citation type="journal article" date="2011" name="J. Bacteriol.">
        <title>Comparative genomics of 28 Salmonella enterica isolates: evidence for CRISPR-mediated adaptive sublineage evolution.</title>
        <authorList>
            <person name="Fricke W.F."/>
            <person name="Mammel M.K."/>
            <person name="McDermott P.F."/>
            <person name="Tartera C."/>
            <person name="White D.G."/>
            <person name="Leclerc J.E."/>
            <person name="Ravel J."/>
            <person name="Cebula T.A."/>
        </authorList>
    </citation>
    <scope>NUCLEOTIDE SEQUENCE [LARGE SCALE GENOMIC DNA]</scope>
    <source>
        <strain>CVM19633</strain>
    </source>
</reference>
<name>SPEE_SALSV</name>
<protein>
    <recommendedName>
        <fullName evidence="1">Polyamine aminopropyltransferase</fullName>
    </recommendedName>
    <alternativeName>
        <fullName evidence="1">Putrescine aminopropyltransferase</fullName>
        <shortName evidence="1">PAPT</shortName>
    </alternativeName>
    <alternativeName>
        <fullName evidence="1">Spermidine synthase</fullName>
        <shortName evidence="1">SPDS</shortName>
        <shortName evidence="1">SPDSY</shortName>
        <ecNumber evidence="1">2.5.1.16</ecNumber>
    </alternativeName>
</protein>
<sequence length="286" mass="32123">MAENTMWHETLHDQFGQYFAVDNVLYHEKTDHQDLIIFENAAFGRVMALDGVVQTTERDEFIYHEMMTHVPLLAHGHAKHVLIIGGGDGAMLREVTRHKNVETITMVEIDAGVVSFCRQYLPNHNAGSYDDPRFTLVIDDGVNFVNQTHQTFDVIISDCTDPIGPGESLFTSAFYEGCKRCLNPGGIFVAQNGVCFLQQDEALDSHRKLSHYFSDVGFYQAAIPTYYGGIMTFAWATDNDALRHLSSEIIQARFHAAGLKCRYYNPAIHVAAFALPQYLHDALSAQ</sequence>
<accession>B4TXL7</accession>
<keyword id="KW-0963">Cytoplasm</keyword>
<keyword id="KW-0620">Polyamine biosynthesis</keyword>
<keyword id="KW-0745">Spermidine biosynthesis</keyword>
<keyword id="KW-0808">Transferase</keyword>
<feature type="chain" id="PRO_1000099300" description="Polyamine aminopropyltransferase">
    <location>
        <begin position="1"/>
        <end position="286"/>
    </location>
</feature>
<feature type="domain" description="PABS" evidence="1">
    <location>
        <begin position="5"/>
        <end position="238"/>
    </location>
</feature>
<feature type="active site" description="Proton acceptor" evidence="1">
    <location>
        <position position="158"/>
    </location>
</feature>
<feature type="binding site" evidence="1">
    <location>
        <position position="33"/>
    </location>
    <ligand>
        <name>S-methyl-5'-thioadenosine</name>
        <dbReference type="ChEBI" id="CHEBI:17509"/>
    </ligand>
</feature>
<feature type="binding site" evidence="1">
    <location>
        <position position="64"/>
    </location>
    <ligand>
        <name>spermidine</name>
        <dbReference type="ChEBI" id="CHEBI:57834"/>
    </ligand>
</feature>
<feature type="binding site" evidence="1">
    <location>
        <position position="88"/>
    </location>
    <ligand>
        <name>spermidine</name>
        <dbReference type="ChEBI" id="CHEBI:57834"/>
    </ligand>
</feature>
<feature type="binding site" evidence="1">
    <location>
        <position position="108"/>
    </location>
    <ligand>
        <name>S-methyl-5'-thioadenosine</name>
        <dbReference type="ChEBI" id="CHEBI:17509"/>
    </ligand>
</feature>
<feature type="binding site" evidence="1">
    <location>
        <begin position="140"/>
        <end position="141"/>
    </location>
    <ligand>
        <name>S-methyl-5'-thioadenosine</name>
        <dbReference type="ChEBI" id="CHEBI:17509"/>
    </ligand>
</feature>
<feature type="binding site" evidence="1">
    <location>
        <begin position="158"/>
        <end position="161"/>
    </location>
    <ligand>
        <name>spermidine</name>
        <dbReference type="ChEBI" id="CHEBI:57834"/>
    </ligand>
</feature>
<feature type="binding site" evidence="1">
    <location>
        <position position="165"/>
    </location>
    <ligand>
        <name>S-methyl-5'-thioadenosine</name>
        <dbReference type="ChEBI" id="CHEBI:17509"/>
    </ligand>
</feature>
<gene>
    <name evidence="1" type="primary">speE</name>
    <name type="ordered locus">SeSA_A0185</name>
</gene>
<dbReference type="EC" id="2.5.1.16" evidence="1"/>
<dbReference type="EMBL" id="CP001127">
    <property type="protein sequence ID" value="ACF90169.1"/>
    <property type="molecule type" value="Genomic_DNA"/>
</dbReference>
<dbReference type="RefSeq" id="WP_000829969.1">
    <property type="nucleotide sequence ID" value="NC_011094.1"/>
</dbReference>
<dbReference type="SMR" id="B4TXL7"/>
<dbReference type="KEGG" id="sew:SeSA_A0185"/>
<dbReference type="HOGENOM" id="CLU_048199_0_0_6"/>
<dbReference type="UniPathway" id="UPA00248">
    <property type="reaction ID" value="UER00314"/>
</dbReference>
<dbReference type="Proteomes" id="UP000001865">
    <property type="component" value="Chromosome"/>
</dbReference>
<dbReference type="GO" id="GO:0005829">
    <property type="term" value="C:cytosol"/>
    <property type="evidence" value="ECO:0007669"/>
    <property type="project" value="TreeGrafter"/>
</dbReference>
<dbReference type="GO" id="GO:0004766">
    <property type="term" value="F:spermidine synthase activity"/>
    <property type="evidence" value="ECO:0007669"/>
    <property type="project" value="UniProtKB-UniRule"/>
</dbReference>
<dbReference type="GO" id="GO:0008295">
    <property type="term" value="P:spermidine biosynthetic process"/>
    <property type="evidence" value="ECO:0007669"/>
    <property type="project" value="UniProtKB-UniRule"/>
</dbReference>
<dbReference type="CDD" id="cd02440">
    <property type="entry name" value="AdoMet_MTases"/>
    <property type="match status" value="1"/>
</dbReference>
<dbReference type="FunFam" id="2.30.140.10:FF:000002">
    <property type="entry name" value="Polyamine aminopropyltransferase"/>
    <property type="match status" value="1"/>
</dbReference>
<dbReference type="FunFam" id="3.40.50.150:FF:000026">
    <property type="entry name" value="Polyamine aminopropyltransferase"/>
    <property type="match status" value="1"/>
</dbReference>
<dbReference type="Gene3D" id="2.30.140.10">
    <property type="entry name" value="Spermidine synthase, tetramerisation domain"/>
    <property type="match status" value="1"/>
</dbReference>
<dbReference type="Gene3D" id="3.40.50.150">
    <property type="entry name" value="Vaccinia Virus protein VP39"/>
    <property type="match status" value="1"/>
</dbReference>
<dbReference type="HAMAP" id="MF_00198">
    <property type="entry name" value="Spermidine_synth"/>
    <property type="match status" value="1"/>
</dbReference>
<dbReference type="InterPro" id="IPR030374">
    <property type="entry name" value="PABS"/>
</dbReference>
<dbReference type="InterPro" id="IPR030373">
    <property type="entry name" value="PABS_CS"/>
</dbReference>
<dbReference type="InterPro" id="IPR029063">
    <property type="entry name" value="SAM-dependent_MTases_sf"/>
</dbReference>
<dbReference type="InterPro" id="IPR001045">
    <property type="entry name" value="Spermi_synthase"/>
</dbReference>
<dbReference type="InterPro" id="IPR035246">
    <property type="entry name" value="Spermidine_synt_N"/>
</dbReference>
<dbReference type="InterPro" id="IPR037163">
    <property type="entry name" value="Spermidine_synt_N_sf"/>
</dbReference>
<dbReference type="NCBIfam" id="NF037959">
    <property type="entry name" value="MFS_SpdSyn"/>
    <property type="match status" value="1"/>
</dbReference>
<dbReference type="NCBIfam" id="NF002010">
    <property type="entry name" value="PRK00811.1"/>
    <property type="match status" value="1"/>
</dbReference>
<dbReference type="NCBIfam" id="TIGR00417">
    <property type="entry name" value="speE"/>
    <property type="match status" value="1"/>
</dbReference>
<dbReference type="PANTHER" id="PTHR11558:SF11">
    <property type="entry name" value="SPERMIDINE SYNTHASE"/>
    <property type="match status" value="1"/>
</dbReference>
<dbReference type="PANTHER" id="PTHR11558">
    <property type="entry name" value="SPERMIDINE/SPERMINE SYNTHASE"/>
    <property type="match status" value="1"/>
</dbReference>
<dbReference type="Pfam" id="PF17284">
    <property type="entry name" value="Spermine_synt_N"/>
    <property type="match status" value="1"/>
</dbReference>
<dbReference type="Pfam" id="PF01564">
    <property type="entry name" value="Spermine_synth"/>
    <property type="match status" value="1"/>
</dbReference>
<dbReference type="SUPFAM" id="SSF53335">
    <property type="entry name" value="S-adenosyl-L-methionine-dependent methyltransferases"/>
    <property type="match status" value="1"/>
</dbReference>
<dbReference type="PROSITE" id="PS01330">
    <property type="entry name" value="PABS_1"/>
    <property type="match status" value="1"/>
</dbReference>
<dbReference type="PROSITE" id="PS51006">
    <property type="entry name" value="PABS_2"/>
    <property type="match status" value="1"/>
</dbReference>
<organism>
    <name type="scientific">Salmonella schwarzengrund (strain CVM19633)</name>
    <dbReference type="NCBI Taxonomy" id="439843"/>
    <lineage>
        <taxon>Bacteria</taxon>
        <taxon>Pseudomonadati</taxon>
        <taxon>Pseudomonadota</taxon>
        <taxon>Gammaproteobacteria</taxon>
        <taxon>Enterobacterales</taxon>
        <taxon>Enterobacteriaceae</taxon>
        <taxon>Salmonella</taxon>
    </lineage>
</organism>
<evidence type="ECO:0000255" key="1">
    <source>
        <dbReference type="HAMAP-Rule" id="MF_00198"/>
    </source>
</evidence>
<proteinExistence type="inferred from homology"/>
<comment type="function">
    <text evidence="1">Catalyzes the irreversible transfer of a propylamine group from the amino donor S-adenosylmethioninamine (decarboxy-AdoMet) to putrescine (1,4-diaminobutane) to yield spermidine.</text>
</comment>
<comment type="catalytic activity">
    <reaction evidence="1">
        <text>S-adenosyl 3-(methylsulfanyl)propylamine + putrescine = S-methyl-5'-thioadenosine + spermidine + H(+)</text>
        <dbReference type="Rhea" id="RHEA:12721"/>
        <dbReference type="ChEBI" id="CHEBI:15378"/>
        <dbReference type="ChEBI" id="CHEBI:17509"/>
        <dbReference type="ChEBI" id="CHEBI:57443"/>
        <dbReference type="ChEBI" id="CHEBI:57834"/>
        <dbReference type="ChEBI" id="CHEBI:326268"/>
        <dbReference type="EC" id="2.5.1.16"/>
    </reaction>
</comment>
<comment type="pathway">
    <text evidence="1">Amine and polyamine biosynthesis; spermidine biosynthesis; spermidine from putrescine: step 1/1.</text>
</comment>
<comment type="subunit">
    <text evidence="1">Homodimer or homotetramer.</text>
</comment>
<comment type="subcellular location">
    <subcellularLocation>
        <location evidence="1">Cytoplasm</location>
    </subcellularLocation>
</comment>
<comment type="similarity">
    <text evidence="1">Belongs to the spermidine/spermine synthase family.</text>
</comment>